<name>EX7L_ESCF3</name>
<proteinExistence type="inferred from homology"/>
<gene>
    <name evidence="1" type="primary">xseA</name>
    <name type="ordered locus">EFER_0666</name>
</gene>
<sequence length="455" mass="51228">MLPSQSPAIFTVSRLNQTVRLLLEHEMGQVWISGEISNFTQPASGHWYFTLKDDNAQVRCAMFRNSNRRVTFRPQHGQQVLVRANITLYEPRGDYQIIVESMQPAGEGLLQQKYEQLKAKLQAEGLFDQQLKKTLPSPAHCVGVITSKTGAALHDILHVLKRRDPSLPVIIYPTAVQGDDAPGQIVRAIELANLRNECDVLIVGRGGGSLEDLWSFNDERVARGIFASRIPVVSAVGHETDVTIADFVADLRAPTPSAAAEVVSRNQQELLRQVQSAQQRLEMAMDYYLANRTRRFTQIHHRLQQQHPQLRLARQQTTLERLQKRMSFALENQLKRAGQQQQRLTLRLNQQNPQPKIHRAQTRVQQLEYRLAENLRAQLSAMRERFGNTVTHLEAVSPLSTLARGYSVTSAADGAVLKQVKQVKVGETLTTRLGDGVVISEVSAVTKSRKPRKKN</sequence>
<accession>B7LKD2</accession>
<keyword id="KW-0963">Cytoplasm</keyword>
<keyword id="KW-0269">Exonuclease</keyword>
<keyword id="KW-0378">Hydrolase</keyword>
<keyword id="KW-0540">Nuclease</keyword>
<comment type="function">
    <text evidence="1">Bidirectionally degrades single-stranded DNA into large acid-insoluble oligonucleotides, which are then degraded further into small acid-soluble oligonucleotides.</text>
</comment>
<comment type="catalytic activity">
    <reaction evidence="1">
        <text>Exonucleolytic cleavage in either 5'- to 3'- or 3'- to 5'-direction to yield nucleoside 5'-phosphates.</text>
        <dbReference type="EC" id="3.1.11.6"/>
    </reaction>
</comment>
<comment type="subunit">
    <text evidence="1">Heterooligomer composed of large and small subunits.</text>
</comment>
<comment type="subcellular location">
    <subcellularLocation>
        <location evidence="1">Cytoplasm</location>
    </subcellularLocation>
</comment>
<comment type="similarity">
    <text evidence="1">Belongs to the XseA family.</text>
</comment>
<reference key="1">
    <citation type="journal article" date="2009" name="PLoS Genet.">
        <title>Organised genome dynamics in the Escherichia coli species results in highly diverse adaptive paths.</title>
        <authorList>
            <person name="Touchon M."/>
            <person name="Hoede C."/>
            <person name="Tenaillon O."/>
            <person name="Barbe V."/>
            <person name="Baeriswyl S."/>
            <person name="Bidet P."/>
            <person name="Bingen E."/>
            <person name="Bonacorsi S."/>
            <person name="Bouchier C."/>
            <person name="Bouvet O."/>
            <person name="Calteau A."/>
            <person name="Chiapello H."/>
            <person name="Clermont O."/>
            <person name="Cruveiller S."/>
            <person name="Danchin A."/>
            <person name="Diard M."/>
            <person name="Dossat C."/>
            <person name="Karoui M.E."/>
            <person name="Frapy E."/>
            <person name="Garry L."/>
            <person name="Ghigo J.M."/>
            <person name="Gilles A.M."/>
            <person name="Johnson J."/>
            <person name="Le Bouguenec C."/>
            <person name="Lescat M."/>
            <person name="Mangenot S."/>
            <person name="Martinez-Jehanne V."/>
            <person name="Matic I."/>
            <person name="Nassif X."/>
            <person name="Oztas S."/>
            <person name="Petit M.A."/>
            <person name="Pichon C."/>
            <person name="Rouy Z."/>
            <person name="Ruf C.S."/>
            <person name="Schneider D."/>
            <person name="Tourret J."/>
            <person name="Vacherie B."/>
            <person name="Vallenet D."/>
            <person name="Medigue C."/>
            <person name="Rocha E.P.C."/>
            <person name="Denamur E."/>
        </authorList>
    </citation>
    <scope>NUCLEOTIDE SEQUENCE [LARGE SCALE GENOMIC DNA]</scope>
    <source>
        <strain>ATCC 35469 / DSM 13698 / BCRC 15582 / CCUG 18766 / IAM 14443 / JCM 21226 / LMG 7866 / NBRC 102419 / NCTC 12128 / CDC 0568-73</strain>
    </source>
</reference>
<protein>
    <recommendedName>
        <fullName evidence="1">Exodeoxyribonuclease 7 large subunit</fullName>
        <ecNumber evidence="1">3.1.11.6</ecNumber>
    </recommendedName>
    <alternativeName>
        <fullName evidence="1">Exodeoxyribonuclease VII large subunit</fullName>
        <shortName evidence="1">Exonuclease VII large subunit</shortName>
    </alternativeName>
</protein>
<dbReference type="EC" id="3.1.11.6" evidence="1"/>
<dbReference type="EMBL" id="CU928158">
    <property type="protein sequence ID" value="CAQ88209.1"/>
    <property type="molecule type" value="Genomic_DNA"/>
</dbReference>
<dbReference type="RefSeq" id="WP_000937872.1">
    <property type="nucleotide sequence ID" value="NC_011740.1"/>
</dbReference>
<dbReference type="SMR" id="B7LKD2"/>
<dbReference type="GeneID" id="75058274"/>
<dbReference type="KEGG" id="efe:EFER_0666"/>
<dbReference type="HOGENOM" id="CLU_023625_3_1_6"/>
<dbReference type="OrthoDB" id="9802795at2"/>
<dbReference type="Proteomes" id="UP000000745">
    <property type="component" value="Chromosome"/>
</dbReference>
<dbReference type="GO" id="GO:0005737">
    <property type="term" value="C:cytoplasm"/>
    <property type="evidence" value="ECO:0007669"/>
    <property type="project" value="UniProtKB-SubCell"/>
</dbReference>
<dbReference type="GO" id="GO:0009318">
    <property type="term" value="C:exodeoxyribonuclease VII complex"/>
    <property type="evidence" value="ECO:0007669"/>
    <property type="project" value="InterPro"/>
</dbReference>
<dbReference type="GO" id="GO:0008855">
    <property type="term" value="F:exodeoxyribonuclease VII activity"/>
    <property type="evidence" value="ECO:0007669"/>
    <property type="project" value="UniProtKB-UniRule"/>
</dbReference>
<dbReference type="GO" id="GO:0003676">
    <property type="term" value="F:nucleic acid binding"/>
    <property type="evidence" value="ECO:0007669"/>
    <property type="project" value="InterPro"/>
</dbReference>
<dbReference type="GO" id="GO:0006308">
    <property type="term" value="P:DNA catabolic process"/>
    <property type="evidence" value="ECO:0007669"/>
    <property type="project" value="UniProtKB-UniRule"/>
</dbReference>
<dbReference type="CDD" id="cd04489">
    <property type="entry name" value="ExoVII_LU_OBF"/>
    <property type="match status" value="1"/>
</dbReference>
<dbReference type="HAMAP" id="MF_00378">
    <property type="entry name" value="Exonuc_7_L"/>
    <property type="match status" value="1"/>
</dbReference>
<dbReference type="InterPro" id="IPR003753">
    <property type="entry name" value="Exonuc_VII_L"/>
</dbReference>
<dbReference type="InterPro" id="IPR020579">
    <property type="entry name" value="Exonuc_VII_lsu_C"/>
</dbReference>
<dbReference type="InterPro" id="IPR025824">
    <property type="entry name" value="OB-fold_nuc-bd_dom"/>
</dbReference>
<dbReference type="NCBIfam" id="TIGR00237">
    <property type="entry name" value="xseA"/>
    <property type="match status" value="1"/>
</dbReference>
<dbReference type="PANTHER" id="PTHR30008">
    <property type="entry name" value="EXODEOXYRIBONUCLEASE 7 LARGE SUBUNIT"/>
    <property type="match status" value="1"/>
</dbReference>
<dbReference type="PANTHER" id="PTHR30008:SF0">
    <property type="entry name" value="EXODEOXYRIBONUCLEASE 7 LARGE SUBUNIT"/>
    <property type="match status" value="1"/>
</dbReference>
<dbReference type="Pfam" id="PF02601">
    <property type="entry name" value="Exonuc_VII_L"/>
    <property type="match status" value="1"/>
</dbReference>
<dbReference type="Pfam" id="PF13742">
    <property type="entry name" value="tRNA_anti_2"/>
    <property type="match status" value="1"/>
</dbReference>
<evidence type="ECO:0000255" key="1">
    <source>
        <dbReference type="HAMAP-Rule" id="MF_00378"/>
    </source>
</evidence>
<organism>
    <name type="scientific">Escherichia fergusonii (strain ATCC 35469 / DSM 13698 / CCUG 18766 / IAM 14443 / JCM 21226 / LMG 7866 / NBRC 102419 / NCTC 12128 / CDC 0568-73)</name>
    <dbReference type="NCBI Taxonomy" id="585054"/>
    <lineage>
        <taxon>Bacteria</taxon>
        <taxon>Pseudomonadati</taxon>
        <taxon>Pseudomonadota</taxon>
        <taxon>Gammaproteobacteria</taxon>
        <taxon>Enterobacterales</taxon>
        <taxon>Enterobacteriaceae</taxon>
        <taxon>Escherichia</taxon>
    </lineage>
</organism>
<feature type="chain" id="PRO_1000122062" description="Exodeoxyribonuclease 7 large subunit">
    <location>
        <begin position="1"/>
        <end position="455"/>
    </location>
</feature>